<comment type="function">
    <molecule>Ubiquitin</molecule>
    <text evidence="2">Ubiquitin exists either covalently attached to another protein, or free (unanchored). When covalently bound, it is conjugated to target proteins via an isopeptide bond either as a monomer (monoubiquitin), a polymer linked via different Lys residues of the ubiquitin (polyubiquitin chains) or a linear polymer linked via the initiator Met of the ubiquitin (linear polyubiquitin chains). Polyubiquitin chains, when attached to a target protein, have different functions depending on the Lys residue of the ubiquitin that is linked: Lys-48-linked is involved in protein degradation via the proteasome. Linear polymer chains formed via attachment by the initiator Met lead to cell signaling. Ubiquitin is usually conjugated to Lys residues of target proteins, however, in rare cases, conjugation to Cys or Ser residues has been observed. When polyubiquitin is free (unanchored-polyubiquitin), it also has distinct roles, such as in activation of protein kinases, and in signaling.</text>
</comment>
<comment type="function">
    <molecule>Small ribosomal subunit protein eS31</molecule>
    <text evidence="2">Component of the 40S subunit of the ribosome. Part of the small subunit (SSU) processome, first precursor of the small eukaryotic ribosomal subunit. During the assembly of the SSU processome in the nucleolus, many ribosome biogenesis factors, an RNA chaperone and ribosomal proteins associate with the nascent pre-rRNA and work in concert to generate RNA folding, modifications, rearrangements and cleavage as well as targeted degradation of pre-ribosomal RNA by the RNA exosome.</text>
</comment>
<comment type="subunit">
    <molecule>Small ribosomal subunit protein eS31</molecule>
    <text evidence="2">Part of the 40S ribosomal subunit. Part of the small subunit (SSU) processome, composed of more than 70 proteins and the RNA chaperone small nucleolar RNA (snoRNA) U3.</text>
</comment>
<comment type="subcellular location">
    <molecule>Ubiquitin</molecule>
    <subcellularLocation>
        <location evidence="1">Cytoplasm</location>
    </subcellularLocation>
    <subcellularLocation>
        <location evidence="1">Nucleus</location>
    </subcellularLocation>
</comment>
<comment type="subcellular location">
    <molecule>Small ribosomal subunit protein eS31</molecule>
    <subcellularLocation>
        <location evidence="2">Nucleus</location>
        <location evidence="2">Nucleolus</location>
    </subcellularLocation>
</comment>
<comment type="miscellaneous">
    <text>In Drosophila ubiquitin is encoded by 3 different genes. RpL40 and RpS27A genes code for a single copy of ubiquitin fused to the ribosomal proteins eL40 and eS31, respectively. Ubi-p63E gene codes for a polyubiquitin precursor with exact head to tail repeats.</text>
</comment>
<comment type="miscellaneous">
    <text>For a better understanding, features related to ubiquitin are only indicated for the first chain.</text>
</comment>
<comment type="similarity">
    <text evidence="4">In the N-terminal section; belongs to the ubiquitin family.</text>
</comment>
<comment type="similarity">
    <text evidence="4">In the C-terminal section; belongs to the eukaryotic ribosomal protein eS31 family.</text>
</comment>
<comment type="sequence caution" evidence="4">
    <conflict type="erroneous gene model prediction">
        <sequence resource="EMBL-CDS" id="CAA48871"/>
    </conflict>
</comment>
<organism>
    <name type="scientific">Drosophila melanogaster</name>
    <name type="common">Fruit fly</name>
    <dbReference type="NCBI Taxonomy" id="7227"/>
    <lineage>
        <taxon>Eukaryota</taxon>
        <taxon>Metazoa</taxon>
        <taxon>Ecdysozoa</taxon>
        <taxon>Arthropoda</taxon>
        <taxon>Hexapoda</taxon>
        <taxon>Insecta</taxon>
        <taxon>Pterygota</taxon>
        <taxon>Neoptera</taxon>
        <taxon>Endopterygota</taxon>
        <taxon>Diptera</taxon>
        <taxon>Brachycera</taxon>
        <taxon>Muscomorpha</taxon>
        <taxon>Ephydroidea</taxon>
        <taxon>Drosophilidae</taxon>
        <taxon>Drosophila</taxon>
        <taxon>Sophophora</taxon>
    </lineage>
</organism>
<feature type="chain" id="PRO_0000396482" description="Ubiquitin">
    <location>
        <begin position="1"/>
        <end position="76"/>
    </location>
</feature>
<feature type="chain" id="PRO_0000396483" description="Small ribosomal subunit protein eS31">
    <location>
        <begin position="77"/>
        <end position="156"/>
    </location>
</feature>
<feature type="domain" description="Ubiquitin-like" evidence="3">
    <location>
        <begin position="1"/>
        <end position="76"/>
    </location>
</feature>
<feature type="zinc finger region" description="C4-type">
    <location>
        <begin position="121"/>
        <end position="144"/>
    </location>
</feature>
<feature type="site" description="Interacts with activating enzyme">
    <location>
        <position position="54"/>
    </location>
</feature>
<feature type="site" description="Essential for function">
    <location>
        <position position="68"/>
    </location>
</feature>
<feature type="site" description="Interacts with activating enzyme">
    <location>
        <position position="72"/>
    </location>
</feature>
<feature type="cross-link" description="Glycyl lysine isopeptide (Lys-Gly) (interchain with G-Cter in ubiquitin)">
    <location>
        <position position="48"/>
    </location>
</feature>
<feature type="cross-link" description="Glycyl lysine isopeptide (Gly-Lys) (interchain with K-? in acceptor proteins)">
    <location>
        <position position="76"/>
    </location>
</feature>
<evidence type="ECO:0000250" key="1"/>
<evidence type="ECO:0000250" key="2">
    <source>
        <dbReference type="UniProtKB" id="P62979"/>
    </source>
</evidence>
<evidence type="ECO:0000255" key="3">
    <source>
        <dbReference type="PROSITE-ProRule" id="PRU00214"/>
    </source>
</evidence>
<evidence type="ECO:0000305" key="4"/>
<accession>P15357</accession>
<accession>P68198</accession>
<accession>Q0E8I1</accession>
<accession>Q9VKW6</accession>
<accession>Q9VQX7</accession>
<accession>Q9VZL4</accession>
<keyword id="KW-0002">3D-structure</keyword>
<keyword id="KW-0963">Cytoplasm</keyword>
<keyword id="KW-1017">Isopeptide bond</keyword>
<keyword id="KW-0479">Metal-binding</keyword>
<keyword id="KW-0539">Nucleus</keyword>
<keyword id="KW-1185">Reference proteome</keyword>
<keyword id="KW-0687">Ribonucleoprotein</keyword>
<keyword id="KW-0689">Ribosomal protein</keyword>
<keyword id="KW-0832">Ubl conjugation</keyword>
<keyword id="KW-0862">Zinc</keyword>
<keyword id="KW-0863">Zinc-finger</keyword>
<dbReference type="EMBL" id="M22536">
    <property type="protein sequence ID" value="AAA28998.1"/>
    <property type="molecule type" value="mRNA"/>
</dbReference>
<dbReference type="EMBL" id="X69119">
    <property type="protein sequence ID" value="CAA48871.1"/>
    <property type="status" value="ALT_SEQ"/>
    <property type="molecule type" value="Genomic_DNA"/>
</dbReference>
<dbReference type="EMBL" id="AE014134">
    <property type="protein sequence ID" value="AAF52941.1"/>
    <property type="molecule type" value="Genomic_DNA"/>
</dbReference>
<dbReference type="RefSeq" id="NP_476778.1">
    <property type="nucleotide sequence ID" value="NM_057430.4"/>
</dbReference>
<dbReference type="PDB" id="4V6W">
    <property type="method" value="EM"/>
    <property type="resolution" value="6.00 A"/>
    <property type="chains" value="Af=77-156"/>
</dbReference>
<dbReference type="PDB" id="6XU6">
    <property type="method" value="EM"/>
    <property type="resolution" value="3.50 A"/>
    <property type="chains" value="Af=77-156"/>
</dbReference>
<dbReference type="PDB" id="6XU7">
    <property type="method" value="EM"/>
    <property type="resolution" value="4.90 A"/>
    <property type="chains" value="Af=77-156"/>
</dbReference>
<dbReference type="PDB" id="6XU8">
    <property type="method" value="EM"/>
    <property type="resolution" value="3.00 A"/>
    <property type="chains" value="Af=77-156"/>
</dbReference>
<dbReference type="PDBsum" id="4V6W"/>
<dbReference type="PDBsum" id="6XU6"/>
<dbReference type="PDBsum" id="6XU7"/>
<dbReference type="PDBsum" id="6XU8"/>
<dbReference type="EMDB" id="EMD-10622"/>
<dbReference type="EMDB" id="EMD-10623"/>
<dbReference type="EMDB" id="EMD-10624"/>
<dbReference type="SMR" id="P15357"/>
<dbReference type="BioGRID" id="60502">
    <property type="interactions" value="182"/>
</dbReference>
<dbReference type="FunCoup" id="P15357">
    <property type="interactions" value="1841"/>
</dbReference>
<dbReference type="IntAct" id="P15357">
    <property type="interactions" value="13"/>
</dbReference>
<dbReference type="STRING" id="7227.FBpp0079606"/>
<dbReference type="PaxDb" id="7227-FBpp0079606"/>
<dbReference type="ABCD" id="P15357">
    <property type="antibodies" value="3 sequenced antibodies"/>
</dbReference>
<dbReference type="DNASU" id="34420"/>
<dbReference type="EnsemblMetazoa" id="FBtr0080016">
    <property type="protein sequence ID" value="FBpp0079606"/>
    <property type="gene ID" value="FBgn0003942"/>
</dbReference>
<dbReference type="GeneID" id="34420"/>
<dbReference type="KEGG" id="dme:Dmel_CG5271"/>
<dbReference type="AGR" id="FB:FBgn0003942"/>
<dbReference type="CTD" id="6233"/>
<dbReference type="FlyBase" id="FBgn0003942">
    <property type="gene designation" value="RpS27A"/>
</dbReference>
<dbReference type="VEuPathDB" id="VectorBase:FBgn0003942"/>
<dbReference type="eggNOG" id="KOG0004">
    <property type="taxonomic scope" value="Eukaryota"/>
</dbReference>
<dbReference type="HOGENOM" id="CLU_010412_2_0_1"/>
<dbReference type="InParanoid" id="P15357"/>
<dbReference type="OMA" id="GVFMAFH"/>
<dbReference type="OrthoDB" id="428577at2759"/>
<dbReference type="PhylomeDB" id="P15357"/>
<dbReference type="Reactome" id="R-DME-110312">
    <property type="pathway name" value="Translesion synthesis by REV1"/>
</dbReference>
<dbReference type="Reactome" id="R-DME-110314">
    <property type="pathway name" value="Recognition of DNA damage by PCNA-containing replication complex"/>
</dbReference>
<dbReference type="Reactome" id="R-DME-110320">
    <property type="pathway name" value="Translesion Synthesis by POLH"/>
</dbReference>
<dbReference type="Reactome" id="R-DME-1234176">
    <property type="pathway name" value="Oxygen-dependent proline hydroxylation of Hypoxia-inducible Factor Alpha"/>
</dbReference>
<dbReference type="Reactome" id="R-DME-1253288">
    <property type="pathway name" value="Downregulation of ERBB4 signaling"/>
</dbReference>
<dbReference type="Reactome" id="R-DME-1295596">
    <property type="pathway name" value="Spry regulation of FGF signaling"/>
</dbReference>
<dbReference type="Reactome" id="R-DME-1358803">
    <property type="pathway name" value="Downregulation of ERBB2:ERBB3 signaling"/>
</dbReference>
<dbReference type="Reactome" id="R-DME-156827">
    <property type="pathway name" value="L13a-mediated translational silencing of Ceruloplasmin expression"/>
</dbReference>
<dbReference type="Reactome" id="R-DME-174048">
    <property type="pathway name" value="APC/C:Cdc20 mediated degradation of Cyclin B"/>
</dbReference>
<dbReference type="Reactome" id="R-DME-174084">
    <property type="pathway name" value="Autodegradation of Cdh1 by Cdh1:APC/C"/>
</dbReference>
<dbReference type="Reactome" id="R-DME-174113">
    <property type="pathway name" value="SCF-beta-TrCP mediated degradation of Emi1"/>
</dbReference>
<dbReference type="Reactome" id="R-DME-174154">
    <property type="pathway name" value="APC/C:Cdc20 mediated degradation of Securin"/>
</dbReference>
<dbReference type="Reactome" id="R-DME-174178">
    <property type="pathway name" value="APC/C:Cdh1 mediated degradation of Cdc20 and other APC/C:Cdh1 targeted proteins in late mitosis/early G1"/>
</dbReference>
<dbReference type="Reactome" id="R-DME-174184">
    <property type="pathway name" value="Cdc20:Phospho-APC/C mediated degradation of Cyclin A"/>
</dbReference>
<dbReference type="Reactome" id="R-DME-179409">
    <property type="pathway name" value="APC-Cdc20 mediated degradation of Nek2A"/>
</dbReference>
<dbReference type="Reactome" id="R-DME-1799339">
    <property type="pathway name" value="SRP-dependent cotranslational protein targeting to membrane"/>
</dbReference>
<dbReference type="Reactome" id="R-DME-182971">
    <property type="pathway name" value="EGFR downregulation"/>
</dbReference>
<dbReference type="Reactome" id="R-DME-187577">
    <property type="pathway name" value="SCF(Skp2)-mediated degradation of p27/p21"/>
</dbReference>
<dbReference type="Reactome" id="R-DME-195253">
    <property type="pathway name" value="Degradation of beta-catenin by the destruction complex"/>
</dbReference>
<dbReference type="Reactome" id="R-DME-209360">
    <property type="pathway name" value="Ubiquitination and proteolysis of phosphorylated CI"/>
</dbReference>
<dbReference type="Reactome" id="R-DME-209447">
    <property type="pathway name" value="Activation of the IkappaB kinase complex, KEY:IRD5 dimer:KEY"/>
</dbReference>
<dbReference type="Reactome" id="R-DME-209461">
    <property type="pathway name" value="Ubiquitination and degradation of phosphorylated ARM"/>
</dbReference>
<dbReference type="Reactome" id="R-DME-209560">
    <property type="pathway name" value="NF-kB is activated and signals survival"/>
</dbReference>
<dbReference type="Reactome" id="R-DME-2122948">
    <property type="pathway name" value="Activated NOTCH1 Transmits Signal to the Nucleus"/>
</dbReference>
<dbReference type="Reactome" id="R-DME-216167">
    <property type="pathway name" value="Nuclear CI is degraded"/>
</dbReference>
<dbReference type="Reactome" id="R-DME-2173788">
    <property type="pathway name" value="Downregulation of TGF-beta receptor signaling"/>
</dbReference>
<dbReference type="Reactome" id="R-DME-2173791">
    <property type="pathway name" value="TGF-beta receptor signaling in EMT (epithelial to mesenchymal transition)"/>
</dbReference>
<dbReference type="Reactome" id="R-DME-2173795">
    <property type="pathway name" value="Downregulation of SMAD2/3:SMAD4 transcriptional activity"/>
</dbReference>
<dbReference type="Reactome" id="R-DME-2173796">
    <property type="pathway name" value="SMAD2/SMAD3:SMAD4 heterotrimer regulates transcription"/>
</dbReference>
<dbReference type="Reactome" id="R-DME-2467813">
    <property type="pathway name" value="Separation of Sister Chromatids"/>
</dbReference>
<dbReference type="Reactome" id="R-DME-2559582">
    <property type="pathway name" value="Senescence-Associated Secretory Phenotype (SASP)"/>
</dbReference>
<dbReference type="Reactome" id="R-DME-3134975">
    <property type="pathway name" value="Regulation of innate immune responses to cytosolic DNA"/>
</dbReference>
<dbReference type="Reactome" id="R-DME-3769402">
    <property type="pathway name" value="Deactivation of the beta-catenin transactivating complex"/>
</dbReference>
<dbReference type="Reactome" id="R-DME-382556">
    <property type="pathway name" value="ABC-family proteins mediated transport"/>
</dbReference>
<dbReference type="Reactome" id="R-DME-432395">
    <property type="pathway name" value="Degradation of TIM"/>
</dbReference>
<dbReference type="Reactome" id="R-DME-432524">
    <property type="pathway name" value="Degradation of PER"/>
</dbReference>
<dbReference type="Reactome" id="R-DME-445989">
    <property type="pathway name" value="TAK1-dependent IKK and NF-kappa-B activation"/>
</dbReference>
<dbReference type="Reactome" id="R-DME-450302">
    <property type="pathway name" value="activated TAK1 mediates p38 MAPK activation"/>
</dbReference>
<dbReference type="Reactome" id="R-DME-450321">
    <property type="pathway name" value="JNK (c-Jun kinases) phosphorylation and activation mediated by activated human TAK1"/>
</dbReference>
<dbReference type="Reactome" id="R-DME-4608870">
    <property type="pathway name" value="Asymmetric localization of PCP proteins"/>
</dbReference>
<dbReference type="Reactome" id="R-DME-4641257">
    <property type="pathway name" value="Degradation of AXIN"/>
</dbReference>
<dbReference type="Reactome" id="R-DME-4641258">
    <property type="pathway name" value="Degradation of DVL"/>
</dbReference>
<dbReference type="Reactome" id="R-DME-5205685">
    <property type="pathway name" value="PINK1-PRKN Mediated Mitophagy"/>
</dbReference>
<dbReference type="Reactome" id="R-DME-532668">
    <property type="pathway name" value="N-glycan trimming in the ER and Calnexin/Calreticulin cycle"/>
</dbReference>
<dbReference type="Reactome" id="R-DME-5357905">
    <property type="pathway name" value="Regulation of TNFR1 signaling"/>
</dbReference>
<dbReference type="Reactome" id="R-DME-5358346">
    <property type="pathway name" value="Hedgehog ligand biogenesis"/>
</dbReference>
<dbReference type="Reactome" id="R-DME-538864">
    <property type="pathway name" value="Degradation of CRY"/>
</dbReference>
<dbReference type="Reactome" id="R-DME-5607761">
    <property type="pathway name" value="Dectin-1 mediated noncanonical NF-kB signaling"/>
</dbReference>
<dbReference type="Reactome" id="R-DME-5610780">
    <property type="pathway name" value="Degradation of GLI1 by the proteasome"/>
</dbReference>
<dbReference type="Reactome" id="R-DME-5610785">
    <property type="pathway name" value="GLI3 is processed to GLI3R by the proteasome"/>
</dbReference>
<dbReference type="Reactome" id="R-DME-5632684">
    <property type="pathway name" value="Hedgehog 'on' state"/>
</dbReference>
<dbReference type="Reactome" id="R-DME-5654726">
    <property type="pathway name" value="Negative regulation of FGFR1 signaling"/>
</dbReference>
<dbReference type="Reactome" id="R-DME-5654727">
    <property type="pathway name" value="Negative regulation of FGFR2 signaling"/>
</dbReference>
<dbReference type="Reactome" id="R-DME-5654732">
    <property type="pathway name" value="Negative regulation of FGFR3 signaling"/>
</dbReference>
<dbReference type="Reactome" id="R-DME-5654733">
    <property type="pathway name" value="Negative regulation of FGFR4 signaling"/>
</dbReference>
<dbReference type="Reactome" id="R-DME-5655862">
    <property type="pathway name" value="Translesion synthesis by POLK"/>
</dbReference>
<dbReference type="Reactome" id="R-DME-5656121">
    <property type="pathway name" value="Translesion synthesis by POLI"/>
</dbReference>
<dbReference type="Reactome" id="R-DME-5658442">
    <property type="pathway name" value="Regulation of RAS by GAPs"/>
</dbReference>
<dbReference type="Reactome" id="R-DME-5675221">
    <property type="pathway name" value="Negative regulation of MAPK pathway"/>
</dbReference>
<dbReference type="Reactome" id="R-DME-5675482">
    <property type="pathway name" value="Regulation of necroptotic cell death"/>
</dbReference>
<dbReference type="Reactome" id="R-DME-5676590">
    <property type="pathway name" value="NIK--&gt;noncanonical NF-kB signaling"/>
</dbReference>
<dbReference type="Reactome" id="R-DME-5689603">
    <property type="pathway name" value="UCH proteinases"/>
</dbReference>
<dbReference type="Reactome" id="R-DME-5689877">
    <property type="pathway name" value="Josephin domain DUBs"/>
</dbReference>
<dbReference type="Reactome" id="R-DME-5689880">
    <property type="pathway name" value="Ub-specific processing proteases"/>
</dbReference>
<dbReference type="Reactome" id="R-DME-5689896">
    <property type="pathway name" value="Ovarian tumor domain proteases"/>
</dbReference>
<dbReference type="Reactome" id="R-DME-5689901">
    <property type="pathway name" value="Metalloprotease DUBs"/>
</dbReference>
<dbReference type="Reactome" id="R-DME-5693565">
    <property type="pathway name" value="Recruitment and ATM-mediated phosphorylation of repair and signaling proteins at DNA double strand breaks"/>
</dbReference>
<dbReference type="Reactome" id="R-DME-5696394">
    <property type="pathway name" value="DNA Damage Recognition in GG-NER"/>
</dbReference>
<dbReference type="Reactome" id="R-DME-5696395">
    <property type="pathway name" value="Formation of Incision Complex in GG-NER"/>
</dbReference>
<dbReference type="Reactome" id="R-DME-5696400">
    <property type="pathway name" value="Dual Incision in GG-NER"/>
</dbReference>
<dbReference type="Reactome" id="R-DME-6781823">
    <property type="pathway name" value="Formation of TC-NER Pre-Incision Complex"/>
</dbReference>
<dbReference type="Reactome" id="R-DME-6782135">
    <property type="pathway name" value="Dual incision in TC-NER"/>
</dbReference>
<dbReference type="Reactome" id="R-DME-6782210">
    <property type="pathway name" value="Gap-filling DNA repair synthesis and ligation in TC-NER"/>
</dbReference>
<dbReference type="Reactome" id="R-DME-6804757">
    <property type="pathway name" value="Regulation of TP53 Degradation"/>
</dbReference>
<dbReference type="Reactome" id="R-DME-68949">
    <property type="pathway name" value="Orc1 removal from chromatin"/>
</dbReference>
<dbReference type="Reactome" id="R-DME-69017">
    <property type="pathway name" value="CDK-mediated phosphorylation and removal of Cdc6"/>
</dbReference>
<dbReference type="Reactome" id="R-DME-69231">
    <property type="pathway name" value="Cyclin D associated events in G1"/>
</dbReference>
<dbReference type="Reactome" id="R-DME-69601">
    <property type="pathway name" value="Ubiquitin Mediated Degradation of Phosphorylated Cdc25A"/>
</dbReference>
<dbReference type="Reactome" id="R-DME-72649">
    <property type="pathway name" value="Translation initiation complex formation"/>
</dbReference>
<dbReference type="Reactome" id="R-DME-72689">
    <property type="pathway name" value="Formation of a pool of free 40S subunits"/>
</dbReference>
<dbReference type="Reactome" id="R-DME-72695">
    <property type="pathway name" value="Formation of the ternary complex, and subsequently, the 43S complex"/>
</dbReference>
<dbReference type="Reactome" id="R-DME-72702">
    <property type="pathway name" value="Ribosomal scanning and start codon recognition"/>
</dbReference>
<dbReference type="Reactome" id="R-DME-72706">
    <property type="pathway name" value="GTP hydrolysis and joining of the 60S ribosomal subunit"/>
</dbReference>
<dbReference type="Reactome" id="R-DME-75815">
    <property type="pathway name" value="Ubiquitin-dependent degradation of Cyclin D"/>
</dbReference>
<dbReference type="Reactome" id="R-DME-8849469">
    <property type="pathway name" value="PTK6 Regulates RTKs and Their Effectors AKT1 and DOK1"/>
</dbReference>
<dbReference type="Reactome" id="R-DME-8854050">
    <property type="pathway name" value="FBXL7 down-regulates AURKA during mitotic entry and in early mitosis"/>
</dbReference>
<dbReference type="Reactome" id="R-DME-8856825">
    <property type="pathway name" value="Cargo recognition for clathrin-mediated endocytosis"/>
</dbReference>
<dbReference type="Reactome" id="R-DME-8856828">
    <property type="pathway name" value="Clathrin-mediated endocytosis"/>
</dbReference>
<dbReference type="Reactome" id="R-DME-8863795">
    <property type="pathway name" value="Downregulation of ERBB2 signaling"/>
</dbReference>
<dbReference type="Reactome" id="R-DME-8866427">
    <property type="pathway name" value="VLDLR internalisation and degradation"/>
</dbReference>
<dbReference type="Reactome" id="R-DME-8866652">
    <property type="pathway name" value="Synthesis of active ubiquitin: roles of E1 and E2 enzymes"/>
</dbReference>
<dbReference type="Reactome" id="R-DME-8866654">
    <property type="pathway name" value="E3 ubiquitin ligases ubiquitinate target proteins"/>
</dbReference>
<dbReference type="Reactome" id="R-DME-8939236">
    <property type="pathway name" value="RUNX1 regulates transcription of genes involved in differentiation of HSCs"/>
</dbReference>
<dbReference type="Reactome" id="R-DME-8939902">
    <property type="pathway name" value="Regulation of RUNX2 expression and activity"/>
</dbReference>
<dbReference type="Reactome" id="R-DME-8941858">
    <property type="pathway name" value="Regulation of RUNX3 expression and activity"/>
</dbReference>
<dbReference type="Reactome" id="R-DME-8948747">
    <property type="pathway name" value="Regulation of PTEN localization"/>
</dbReference>
<dbReference type="Reactome" id="R-DME-8948751">
    <property type="pathway name" value="Regulation of PTEN stability and activity"/>
</dbReference>
<dbReference type="Reactome" id="R-DME-8951664">
    <property type="pathway name" value="Neddylation"/>
</dbReference>
<dbReference type="Reactome" id="R-DME-901032">
    <property type="pathway name" value="ER Quality Control Compartment (ERQC)"/>
</dbReference>
<dbReference type="Reactome" id="R-DME-9010553">
    <property type="pathway name" value="Regulation of expression of SLITs and ROBOs"/>
</dbReference>
<dbReference type="Reactome" id="R-DME-9020702">
    <property type="pathway name" value="Interleukin-1 signaling"/>
</dbReference>
<dbReference type="Reactome" id="R-DME-9033241">
    <property type="pathway name" value="Peroxisomal protein import"/>
</dbReference>
<dbReference type="Reactome" id="R-DME-912631">
    <property type="pathway name" value="Regulation of signaling by CBL"/>
</dbReference>
<dbReference type="Reactome" id="R-DME-917729">
    <property type="pathway name" value="Endosomal Sorting Complex Required For Transport (ESCRT)"/>
</dbReference>
<dbReference type="Reactome" id="R-DME-917937">
    <property type="pathway name" value="Iron uptake and transport"/>
</dbReference>
<dbReference type="Reactome" id="R-DME-937039">
    <property type="pathway name" value="IRAK1 recruits IKK complex"/>
</dbReference>
<dbReference type="Reactome" id="R-DME-937042">
    <property type="pathway name" value="IRAK2 mediated activation of TAK1 complex"/>
</dbReference>
<dbReference type="Reactome" id="R-DME-937072">
    <property type="pathway name" value="TRAF6-mediated induction of TAK1 complex within TLR4 complex"/>
</dbReference>
<dbReference type="Reactome" id="R-DME-9646399">
    <property type="pathway name" value="Aggrephagy"/>
</dbReference>
<dbReference type="Reactome" id="R-DME-9648002">
    <property type="pathway name" value="RAS processing"/>
</dbReference>
<dbReference type="Reactome" id="R-DME-9664873">
    <property type="pathway name" value="Pexophagy"/>
</dbReference>
<dbReference type="Reactome" id="R-DME-9708530">
    <property type="pathway name" value="Regulation of BACH1 activity"/>
</dbReference>
<dbReference type="Reactome" id="R-DME-975144">
    <property type="pathway name" value="IRAK1 recruits IKK complex upon TLR7/8 or 9 stimulation"/>
</dbReference>
<dbReference type="Reactome" id="R-DME-975163">
    <property type="pathway name" value="IRAK2 mediated activation of TAK1 complex upon TLR7/8 or 9 stimulation"/>
</dbReference>
<dbReference type="Reactome" id="R-DME-9755511">
    <property type="pathway name" value="KEAP1-NFE2L2 pathway"/>
</dbReference>
<dbReference type="Reactome" id="R-DME-975956">
    <property type="pathway name" value="Nonsense Mediated Decay (NMD) independent of the Exon Junction Complex (EJC)"/>
</dbReference>
<dbReference type="Reactome" id="R-DME-975957">
    <property type="pathway name" value="Nonsense Mediated Decay (NMD) enhanced by the Exon Junction Complex (EJC)"/>
</dbReference>
<dbReference type="Reactome" id="R-DME-9762114">
    <property type="pathway name" value="GSK3B and BTRC:CUL1-mediated-degradation of NFE2L2"/>
</dbReference>
<dbReference type="Reactome" id="R-DME-983168">
    <property type="pathway name" value="Antigen processing: Ubiquitination &amp; Proteasome degradation"/>
</dbReference>
<dbReference type="Reactome" id="R-DME-9861718">
    <property type="pathway name" value="Regulation of pyruvate metabolism"/>
</dbReference>
<dbReference type="SignaLink" id="P15357"/>
<dbReference type="BioGRID-ORCS" id="34420">
    <property type="hits" value="1 hit in 1 CRISPR screen"/>
</dbReference>
<dbReference type="ChiTaRS" id="RpS27A">
    <property type="organism name" value="fly"/>
</dbReference>
<dbReference type="GenomeRNAi" id="34420"/>
<dbReference type="PRO" id="PR:P15357"/>
<dbReference type="Proteomes" id="UP000000803">
    <property type="component" value="Chromosome 2L"/>
</dbReference>
<dbReference type="Bgee" id="FBgn0003942">
    <property type="expression patterns" value="Expressed in egg cell and 292 other cell types or tissues"/>
</dbReference>
<dbReference type="ExpressionAtlas" id="P15357">
    <property type="expression patterns" value="baseline and differential"/>
</dbReference>
<dbReference type="GO" id="GO:0005737">
    <property type="term" value="C:cytoplasm"/>
    <property type="evidence" value="ECO:0000318"/>
    <property type="project" value="GO_Central"/>
</dbReference>
<dbReference type="GO" id="GO:0005829">
    <property type="term" value="C:cytosol"/>
    <property type="evidence" value="ECO:0000304"/>
    <property type="project" value="Reactome"/>
</dbReference>
<dbReference type="GO" id="GO:0022626">
    <property type="term" value="C:cytosolic ribosome"/>
    <property type="evidence" value="ECO:0000314"/>
    <property type="project" value="FlyBase"/>
</dbReference>
<dbReference type="GO" id="GO:0022627">
    <property type="term" value="C:cytosolic small ribosomal subunit"/>
    <property type="evidence" value="ECO:0000304"/>
    <property type="project" value="FlyBase"/>
</dbReference>
<dbReference type="GO" id="GO:0005730">
    <property type="term" value="C:nucleolus"/>
    <property type="evidence" value="ECO:0007669"/>
    <property type="project" value="UniProtKB-SubCell"/>
</dbReference>
<dbReference type="GO" id="GO:0005654">
    <property type="term" value="C:nucleoplasm"/>
    <property type="evidence" value="ECO:0000304"/>
    <property type="project" value="Reactome"/>
</dbReference>
<dbReference type="GO" id="GO:0005634">
    <property type="term" value="C:nucleus"/>
    <property type="evidence" value="ECO:0000318"/>
    <property type="project" value="GO_Central"/>
</dbReference>
<dbReference type="GO" id="GO:0032040">
    <property type="term" value="C:small-subunit processome"/>
    <property type="evidence" value="ECO:0000250"/>
    <property type="project" value="UniProtKB"/>
</dbReference>
<dbReference type="GO" id="GO:0031386">
    <property type="term" value="F:protein tag activity"/>
    <property type="evidence" value="ECO:0000250"/>
    <property type="project" value="FlyBase"/>
</dbReference>
<dbReference type="GO" id="GO:0003735">
    <property type="term" value="F:structural constituent of ribosome"/>
    <property type="evidence" value="ECO:0000314"/>
    <property type="project" value="FlyBase"/>
</dbReference>
<dbReference type="GO" id="GO:0031625">
    <property type="term" value="F:ubiquitin protein ligase binding"/>
    <property type="evidence" value="ECO:0000318"/>
    <property type="project" value="GO_Central"/>
</dbReference>
<dbReference type="GO" id="GO:0008270">
    <property type="term" value="F:zinc ion binding"/>
    <property type="evidence" value="ECO:0007669"/>
    <property type="project" value="UniProtKB-KW"/>
</dbReference>
<dbReference type="GO" id="GO:0002181">
    <property type="term" value="P:cytoplasmic translation"/>
    <property type="evidence" value="ECO:0000304"/>
    <property type="project" value="FlyBase"/>
</dbReference>
<dbReference type="GO" id="GO:0019941">
    <property type="term" value="P:modification-dependent protein catabolic process"/>
    <property type="evidence" value="ECO:0000318"/>
    <property type="project" value="GO_Central"/>
</dbReference>
<dbReference type="GO" id="GO:0016567">
    <property type="term" value="P:protein ubiquitination"/>
    <property type="evidence" value="ECO:0000250"/>
    <property type="project" value="FlyBase"/>
</dbReference>
<dbReference type="GO" id="GO:0042274">
    <property type="term" value="P:ribosomal small subunit biogenesis"/>
    <property type="evidence" value="ECO:0000250"/>
    <property type="project" value="UniProtKB"/>
</dbReference>
<dbReference type="CDD" id="cd01803">
    <property type="entry name" value="Ubl_ubiquitin"/>
    <property type="match status" value="1"/>
</dbReference>
<dbReference type="FunFam" id="3.10.20.90:FF:000008">
    <property type="entry name" value="Ubiquitin-40S ribosomal protein S27a"/>
    <property type="match status" value="1"/>
</dbReference>
<dbReference type="Gene3D" id="6.20.50.150">
    <property type="match status" value="1"/>
</dbReference>
<dbReference type="Gene3D" id="3.10.20.90">
    <property type="entry name" value="Phosphatidylinositol 3-kinase Catalytic Subunit, Chain A, domain 1"/>
    <property type="match status" value="1"/>
</dbReference>
<dbReference type="InterPro" id="IPR002906">
    <property type="entry name" value="Ribosomal_eS31"/>
</dbReference>
<dbReference type="InterPro" id="IPR038582">
    <property type="entry name" value="Ribosomal_eS31_euk-type_sf"/>
</dbReference>
<dbReference type="InterPro" id="IPR011332">
    <property type="entry name" value="Ribosomal_zn-bd"/>
</dbReference>
<dbReference type="InterPro" id="IPR000626">
    <property type="entry name" value="Ubiquitin-like_dom"/>
</dbReference>
<dbReference type="InterPro" id="IPR029071">
    <property type="entry name" value="Ubiquitin-like_domsf"/>
</dbReference>
<dbReference type="InterPro" id="IPR019954">
    <property type="entry name" value="Ubiquitin_CS"/>
</dbReference>
<dbReference type="InterPro" id="IPR019956">
    <property type="entry name" value="Ubiquitin_dom"/>
</dbReference>
<dbReference type="InterPro" id="IPR050158">
    <property type="entry name" value="Ubiquitin_ubiquitin-like"/>
</dbReference>
<dbReference type="PANTHER" id="PTHR10666">
    <property type="entry name" value="UBIQUITIN"/>
    <property type="match status" value="1"/>
</dbReference>
<dbReference type="Pfam" id="PF01599">
    <property type="entry name" value="Ribosomal_S27"/>
    <property type="match status" value="1"/>
</dbReference>
<dbReference type="Pfam" id="PF00240">
    <property type="entry name" value="ubiquitin"/>
    <property type="match status" value="1"/>
</dbReference>
<dbReference type="PRINTS" id="PR00348">
    <property type="entry name" value="UBIQUITIN"/>
</dbReference>
<dbReference type="SMART" id="SM01402">
    <property type="entry name" value="Ribosomal_S27"/>
    <property type="match status" value="1"/>
</dbReference>
<dbReference type="SMART" id="SM00213">
    <property type="entry name" value="UBQ"/>
    <property type="match status" value="1"/>
</dbReference>
<dbReference type="SUPFAM" id="SSF54236">
    <property type="entry name" value="Ubiquitin-like"/>
    <property type="match status" value="1"/>
</dbReference>
<dbReference type="SUPFAM" id="SSF57829">
    <property type="entry name" value="Zn-binding ribosomal proteins"/>
    <property type="match status" value="1"/>
</dbReference>
<dbReference type="PROSITE" id="PS00299">
    <property type="entry name" value="UBIQUITIN_1"/>
    <property type="match status" value="1"/>
</dbReference>
<dbReference type="PROSITE" id="PS50053">
    <property type="entry name" value="UBIQUITIN_2"/>
    <property type="match status" value="1"/>
</dbReference>
<protein>
    <recommendedName>
        <fullName evidence="4">Ubiquitin-ribosomal protein eS31 fusion protein</fullName>
    </recommendedName>
    <component>
        <recommendedName>
            <fullName>Ubiquitin</fullName>
        </recommendedName>
    </component>
    <component>
        <recommendedName>
            <fullName evidence="4">Small ribosomal subunit protein eS31</fullName>
        </recommendedName>
        <alternativeName>
            <fullName>40S ribosomal protein S27a</fullName>
        </alternativeName>
    </component>
</protein>
<proteinExistence type="evidence at protein level"/>
<gene>
    <name type="primary">RpS27A</name>
    <name type="synonym">UB3-D</name>
    <name type="synonym">UBI-F80</name>
    <name type="synonym">Ubi-m</name>
    <name type="ORF">CG5271</name>
</gene>
<reference key="1">
    <citation type="journal article" date="1988" name="Mol. Cell. Biol.">
        <title>Structure and expression of ubiquitin genes of Drosophila melanogaster.</title>
        <authorList>
            <person name="Lee H."/>
            <person name="Simon J.A."/>
            <person name="Lis J.T."/>
        </authorList>
    </citation>
    <scope>NUCLEOTIDE SEQUENCE [MRNA]</scope>
</reference>
<reference key="2">
    <citation type="journal article" date="1994" name="Biochem. J.">
        <title>Structure and expression of the Drosophila ubiquitin-80-amino-acid fusion-protein gene.</title>
        <authorList>
            <person name="Barrio R."/>
            <person name="del Arco A."/>
            <person name="Cabrera H."/>
            <person name="Arribas C."/>
        </authorList>
    </citation>
    <scope>NUCLEOTIDE SEQUENCE [GENOMIC DNA]</scope>
    <source>
        <strain>Canton-S</strain>
    </source>
</reference>
<reference key="3">
    <citation type="journal article" date="2000" name="Science">
        <title>The genome sequence of Drosophila melanogaster.</title>
        <authorList>
            <person name="Adams M.D."/>
            <person name="Celniker S.E."/>
            <person name="Holt R.A."/>
            <person name="Evans C.A."/>
            <person name="Gocayne J.D."/>
            <person name="Amanatides P.G."/>
            <person name="Scherer S.E."/>
            <person name="Li P.W."/>
            <person name="Hoskins R.A."/>
            <person name="Galle R.F."/>
            <person name="George R.A."/>
            <person name="Lewis S.E."/>
            <person name="Richards S."/>
            <person name="Ashburner M."/>
            <person name="Henderson S.N."/>
            <person name="Sutton G.G."/>
            <person name="Wortman J.R."/>
            <person name="Yandell M.D."/>
            <person name="Zhang Q."/>
            <person name="Chen L.X."/>
            <person name="Brandon R.C."/>
            <person name="Rogers Y.-H.C."/>
            <person name="Blazej R.G."/>
            <person name="Champe M."/>
            <person name="Pfeiffer B.D."/>
            <person name="Wan K.H."/>
            <person name="Doyle C."/>
            <person name="Baxter E.G."/>
            <person name="Helt G."/>
            <person name="Nelson C.R."/>
            <person name="Miklos G.L.G."/>
            <person name="Abril J.F."/>
            <person name="Agbayani A."/>
            <person name="An H.-J."/>
            <person name="Andrews-Pfannkoch C."/>
            <person name="Baldwin D."/>
            <person name="Ballew R.M."/>
            <person name="Basu A."/>
            <person name="Baxendale J."/>
            <person name="Bayraktaroglu L."/>
            <person name="Beasley E.M."/>
            <person name="Beeson K.Y."/>
            <person name="Benos P.V."/>
            <person name="Berman B.P."/>
            <person name="Bhandari D."/>
            <person name="Bolshakov S."/>
            <person name="Borkova D."/>
            <person name="Botchan M.R."/>
            <person name="Bouck J."/>
            <person name="Brokstein P."/>
            <person name="Brottier P."/>
            <person name="Burtis K.C."/>
            <person name="Busam D.A."/>
            <person name="Butler H."/>
            <person name="Cadieu E."/>
            <person name="Center A."/>
            <person name="Chandra I."/>
            <person name="Cherry J.M."/>
            <person name="Cawley S."/>
            <person name="Dahlke C."/>
            <person name="Davenport L.B."/>
            <person name="Davies P."/>
            <person name="de Pablos B."/>
            <person name="Delcher A."/>
            <person name="Deng Z."/>
            <person name="Mays A.D."/>
            <person name="Dew I."/>
            <person name="Dietz S.M."/>
            <person name="Dodson K."/>
            <person name="Doup L.E."/>
            <person name="Downes M."/>
            <person name="Dugan-Rocha S."/>
            <person name="Dunkov B.C."/>
            <person name="Dunn P."/>
            <person name="Durbin K.J."/>
            <person name="Evangelista C.C."/>
            <person name="Ferraz C."/>
            <person name="Ferriera S."/>
            <person name="Fleischmann W."/>
            <person name="Fosler C."/>
            <person name="Gabrielian A.E."/>
            <person name="Garg N.S."/>
            <person name="Gelbart W.M."/>
            <person name="Glasser K."/>
            <person name="Glodek A."/>
            <person name="Gong F."/>
            <person name="Gorrell J.H."/>
            <person name="Gu Z."/>
            <person name="Guan P."/>
            <person name="Harris M."/>
            <person name="Harris N.L."/>
            <person name="Harvey D.A."/>
            <person name="Heiman T.J."/>
            <person name="Hernandez J.R."/>
            <person name="Houck J."/>
            <person name="Hostin D."/>
            <person name="Houston K.A."/>
            <person name="Howland T.J."/>
            <person name="Wei M.-H."/>
            <person name="Ibegwam C."/>
            <person name="Jalali M."/>
            <person name="Kalush F."/>
            <person name="Karpen G.H."/>
            <person name="Ke Z."/>
            <person name="Kennison J.A."/>
            <person name="Ketchum K.A."/>
            <person name="Kimmel B.E."/>
            <person name="Kodira C.D."/>
            <person name="Kraft C.L."/>
            <person name="Kravitz S."/>
            <person name="Kulp D."/>
            <person name="Lai Z."/>
            <person name="Lasko P."/>
            <person name="Lei Y."/>
            <person name="Levitsky A.A."/>
            <person name="Li J.H."/>
            <person name="Li Z."/>
            <person name="Liang Y."/>
            <person name="Lin X."/>
            <person name="Liu X."/>
            <person name="Mattei B."/>
            <person name="McIntosh T.C."/>
            <person name="McLeod M.P."/>
            <person name="McPherson D."/>
            <person name="Merkulov G."/>
            <person name="Milshina N.V."/>
            <person name="Mobarry C."/>
            <person name="Morris J."/>
            <person name="Moshrefi A."/>
            <person name="Mount S.M."/>
            <person name="Moy M."/>
            <person name="Murphy B."/>
            <person name="Murphy L."/>
            <person name="Muzny D.M."/>
            <person name="Nelson D.L."/>
            <person name="Nelson D.R."/>
            <person name="Nelson K.A."/>
            <person name="Nixon K."/>
            <person name="Nusskern D.R."/>
            <person name="Pacleb J.M."/>
            <person name="Palazzolo M."/>
            <person name="Pittman G.S."/>
            <person name="Pan S."/>
            <person name="Pollard J."/>
            <person name="Puri V."/>
            <person name="Reese M.G."/>
            <person name="Reinert K."/>
            <person name="Remington K."/>
            <person name="Saunders R.D.C."/>
            <person name="Scheeler F."/>
            <person name="Shen H."/>
            <person name="Shue B.C."/>
            <person name="Siden-Kiamos I."/>
            <person name="Simpson M."/>
            <person name="Skupski M.P."/>
            <person name="Smith T.J."/>
            <person name="Spier E."/>
            <person name="Spradling A.C."/>
            <person name="Stapleton M."/>
            <person name="Strong R."/>
            <person name="Sun E."/>
            <person name="Svirskas R."/>
            <person name="Tector C."/>
            <person name="Turner R."/>
            <person name="Venter E."/>
            <person name="Wang A.H."/>
            <person name="Wang X."/>
            <person name="Wang Z.-Y."/>
            <person name="Wassarman D.A."/>
            <person name="Weinstock G.M."/>
            <person name="Weissenbach J."/>
            <person name="Williams S.M."/>
            <person name="Woodage T."/>
            <person name="Worley K.C."/>
            <person name="Wu D."/>
            <person name="Yang S."/>
            <person name="Yao Q.A."/>
            <person name="Ye J."/>
            <person name="Yeh R.-F."/>
            <person name="Zaveri J.S."/>
            <person name="Zhan M."/>
            <person name="Zhang G."/>
            <person name="Zhao Q."/>
            <person name="Zheng L."/>
            <person name="Zheng X.H."/>
            <person name="Zhong F.N."/>
            <person name="Zhong W."/>
            <person name="Zhou X."/>
            <person name="Zhu S.C."/>
            <person name="Zhu X."/>
            <person name="Smith H.O."/>
            <person name="Gibbs R.A."/>
            <person name="Myers E.W."/>
            <person name="Rubin G.M."/>
            <person name="Venter J.C."/>
        </authorList>
    </citation>
    <scope>NUCLEOTIDE SEQUENCE [LARGE SCALE GENOMIC DNA]</scope>
    <source>
        <strain>Berkeley</strain>
    </source>
</reference>
<reference key="4">
    <citation type="journal article" date="2002" name="Genome Biol.">
        <title>Annotation of the Drosophila melanogaster euchromatic genome: a systematic review.</title>
        <authorList>
            <person name="Misra S."/>
            <person name="Crosby M.A."/>
            <person name="Mungall C.J."/>
            <person name="Matthews B.B."/>
            <person name="Campbell K.S."/>
            <person name="Hradecky P."/>
            <person name="Huang Y."/>
            <person name="Kaminker J.S."/>
            <person name="Millburn G.H."/>
            <person name="Prochnik S.E."/>
            <person name="Smith C.D."/>
            <person name="Tupy J.L."/>
            <person name="Whitfield E.J."/>
            <person name="Bayraktaroglu L."/>
            <person name="Berman B.P."/>
            <person name="Bettencourt B.R."/>
            <person name="Celniker S.E."/>
            <person name="de Grey A.D.N.J."/>
            <person name="Drysdale R.A."/>
            <person name="Harris N.L."/>
            <person name="Richter J."/>
            <person name="Russo S."/>
            <person name="Schroeder A.J."/>
            <person name="Shu S.Q."/>
            <person name="Stapleton M."/>
            <person name="Yamada C."/>
            <person name="Ashburner M."/>
            <person name="Gelbart W.M."/>
            <person name="Rubin G.M."/>
            <person name="Lewis S.E."/>
        </authorList>
    </citation>
    <scope>GENOME REANNOTATION</scope>
    <source>
        <strain>Berkeley</strain>
    </source>
</reference>
<reference key="5">
    <citation type="journal article" date="2013" name="Nature">
        <title>Structures of the human and Drosophila 80S ribosome.</title>
        <authorList>
            <person name="Anger A.M."/>
            <person name="Armache J.P."/>
            <person name="Berninghausen O."/>
            <person name="Habeck M."/>
            <person name="Subklewe M."/>
            <person name="Wilson D.N."/>
            <person name="Beckmann R."/>
        </authorList>
    </citation>
    <scope>STRUCTURE BY ELECTRON MICROSCOPY (6.0 ANGSTROMS) OF THE 80S RIBOSOME</scope>
</reference>
<name>RS27A_DROME</name>
<sequence>MQIFVKTLTGKTITLEVEPSDTIENVKAKIQDKEGIPPDQQRLIFAGKQLEDGRTLSDYNIQKESTLHLVLRLRGGAKKRKKKNYSTPKKIKHKRKKVKLAVLKYYKVDENGKIHRLRRECPGENCGAGVFMAAHEDRHYCGKCNLTFVFSKPEEK</sequence>